<feature type="chain" id="PRO_0000328990" description="TLC domain-containing protein 2">
    <location>
        <begin position="1"/>
        <end position="264"/>
    </location>
</feature>
<feature type="transmembrane region" description="Helical" evidence="1">
    <location>
        <begin position="3"/>
        <end position="23"/>
    </location>
</feature>
<feature type="transmembrane region" description="Helical" evidence="1">
    <location>
        <begin position="42"/>
        <end position="62"/>
    </location>
</feature>
<feature type="transmembrane region" description="Helical" evidence="1">
    <location>
        <begin position="77"/>
        <end position="97"/>
    </location>
</feature>
<feature type="transmembrane region" description="Helical" evidence="1">
    <location>
        <begin position="114"/>
        <end position="134"/>
    </location>
</feature>
<feature type="transmembrane region" description="Helical" evidence="1">
    <location>
        <begin position="169"/>
        <end position="189"/>
    </location>
</feature>
<feature type="transmembrane region" description="Helical" evidence="1">
    <location>
        <begin position="199"/>
        <end position="219"/>
    </location>
</feature>
<feature type="domain" description="TLC" evidence="2">
    <location>
        <begin position="34"/>
        <end position="227"/>
    </location>
</feature>
<feature type="region of interest" description="Disordered" evidence="3">
    <location>
        <begin position="230"/>
        <end position="264"/>
    </location>
</feature>
<feature type="compositionally biased region" description="Basic and acidic residues" evidence="3">
    <location>
        <begin position="237"/>
        <end position="250"/>
    </location>
</feature>
<feature type="compositionally biased region" description="Polar residues" evidence="3">
    <location>
        <begin position="252"/>
        <end position="264"/>
    </location>
</feature>
<keyword id="KW-1003">Cell membrane</keyword>
<keyword id="KW-0472">Membrane</keyword>
<keyword id="KW-1267">Proteomics identification</keyword>
<keyword id="KW-1185">Reference proteome</keyword>
<keyword id="KW-0812">Transmembrane</keyword>
<keyword id="KW-1133">Transmembrane helix</keyword>
<dbReference type="EMBL" id="AC130343">
    <property type="status" value="NOT_ANNOTATED_CDS"/>
    <property type="molecule type" value="Genomic_DNA"/>
</dbReference>
<dbReference type="CCDS" id="CCDS45567.1"/>
<dbReference type="RefSeq" id="NP_001157879.1">
    <property type="nucleotide sequence ID" value="NM_001164407.2"/>
</dbReference>
<dbReference type="SMR" id="A6NGC4"/>
<dbReference type="BioGRID" id="608350">
    <property type="interactions" value="10"/>
</dbReference>
<dbReference type="FunCoup" id="A6NGC4">
    <property type="interactions" value="402"/>
</dbReference>
<dbReference type="IntAct" id="A6NGC4">
    <property type="interactions" value="9"/>
</dbReference>
<dbReference type="STRING" id="9606.ENSP00000331965"/>
<dbReference type="iPTMnet" id="A6NGC4"/>
<dbReference type="PhosphoSitePlus" id="A6NGC4"/>
<dbReference type="BioMuta" id="TLCD2"/>
<dbReference type="jPOST" id="A6NGC4"/>
<dbReference type="MassIVE" id="A6NGC4"/>
<dbReference type="PaxDb" id="9606-ENSP00000331965"/>
<dbReference type="PeptideAtlas" id="A6NGC4"/>
<dbReference type="ProteomicsDB" id="1116"/>
<dbReference type="Pumba" id="A6NGC4"/>
<dbReference type="Antibodypedia" id="62302">
    <property type="antibodies" value="58 antibodies from 12 providers"/>
</dbReference>
<dbReference type="DNASU" id="727910"/>
<dbReference type="Ensembl" id="ENST00000330676.8">
    <property type="protein sequence ID" value="ENSP00000331965.6"/>
    <property type="gene ID" value="ENSG00000185561.10"/>
</dbReference>
<dbReference type="Ensembl" id="ENST00000611774.2">
    <property type="protein sequence ID" value="ENSP00000479301.1"/>
    <property type="gene ID" value="ENSG00000275246.2"/>
</dbReference>
<dbReference type="GeneID" id="727910"/>
<dbReference type="KEGG" id="hsa:727910"/>
<dbReference type="MANE-Select" id="ENST00000330676.8">
    <property type="protein sequence ID" value="ENSP00000331965.6"/>
    <property type="RefSeq nucleotide sequence ID" value="NM_001164407.2"/>
    <property type="RefSeq protein sequence ID" value="NP_001157879.1"/>
</dbReference>
<dbReference type="UCSC" id="uc021tnh.2">
    <property type="organism name" value="human"/>
</dbReference>
<dbReference type="AGR" id="HGNC:33522"/>
<dbReference type="CTD" id="727910"/>
<dbReference type="DisGeNET" id="727910"/>
<dbReference type="GeneCards" id="TLCD2"/>
<dbReference type="HGNC" id="HGNC:33522">
    <property type="gene designation" value="TLCD2"/>
</dbReference>
<dbReference type="HPA" id="ENSG00000185561">
    <property type="expression patterns" value="Low tissue specificity"/>
</dbReference>
<dbReference type="MIM" id="620967">
    <property type="type" value="gene"/>
</dbReference>
<dbReference type="neXtProt" id="NX_A6NGC4"/>
<dbReference type="OpenTargets" id="ENSG00000185561"/>
<dbReference type="PharmGKB" id="PA162405795"/>
<dbReference type="VEuPathDB" id="HostDB:ENSG00000185561"/>
<dbReference type="eggNOG" id="KOG4474">
    <property type="taxonomic scope" value="Eukaryota"/>
</dbReference>
<dbReference type="GeneTree" id="ENSGT01010000222313"/>
<dbReference type="HOGENOM" id="CLU_056440_2_1_1"/>
<dbReference type="InParanoid" id="A6NGC4"/>
<dbReference type="OMA" id="WMSLWLL"/>
<dbReference type="OrthoDB" id="10266980at2759"/>
<dbReference type="PAN-GO" id="A6NGC4">
    <property type="GO annotations" value="5 GO annotations based on evolutionary models"/>
</dbReference>
<dbReference type="PhylomeDB" id="A6NGC4"/>
<dbReference type="TreeFam" id="TF315115"/>
<dbReference type="PathwayCommons" id="A6NGC4"/>
<dbReference type="SignaLink" id="A6NGC4"/>
<dbReference type="BioGRID-ORCS" id="727910">
    <property type="hits" value="12 hits in 1151 CRISPR screens"/>
</dbReference>
<dbReference type="ChiTaRS" id="TLCD2">
    <property type="organism name" value="human"/>
</dbReference>
<dbReference type="GenomeRNAi" id="727910"/>
<dbReference type="Pharos" id="A6NGC4">
    <property type="development level" value="Tdark"/>
</dbReference>
<dbReference type="PRO" id="PR:A6NGC4"/>
<dbReference type="Proteomes" id="UP000005640">
    <property type="component" value="Chromosome 17"/>
</dbReference>
<dbReference type="RNAct" id="A6NGC4">
    <property type="molecule type" value="protein"/>
</dbReference>
<dbReference type="Bgee" id="ENSG00000185561">
    <property type="expression patterns" value="Expressed in mucosa of transverse colon and 96 other cell types or tissues"/>
</dbReference>
<dbReference type="GO" id="GO:0005886">
    <property type="term" value="C:plasma membrane"/>
    <property type="evidence" value="ECO:0000314"/>
    <property type="project" value="UniProtKB"/>
</dbReference>
<dbReference type="GO" id="GO:0071709">
    <property type="term" value="P:membrane assembly"/>
    <property type="evidence" value="ECO:0000315"/>
    <property type="project" value="UniProtKB"/>
</dbReference>
<dbReference type="GO" id="GO:0055091">
    <property type="term" value="P:phospholipid homeostasis"/>
    <property type="evidence" value="ECO:0000315"/>
    <property type="project" value="UniProtKB"/>
</dbReference>
<dbReference type="GO" id="GO:0007009">
    <property type="term" value="P:plasma membrane organization"/>
    <property type="evidence" value="ECO:0000315"/>
    <property type="project" value="UniProtKB"/>
</dbReference>
<dbReference type="GO" id="GO:0097035">
    <property type="term" value="P:regulation of membrane lipid distribution"/>
    <property type="evidence" value="ECO:0000315"/>
    <property type="project" value="UniProtKB"/>
</dbReference>
<dbReference type="InterPro" id="IPR006634">
    <property type="entry name" value="TLC-dom"/>
</dbReference>
<dbReference type="InterPro" id="IPR050846">
    <property type="entry name" value="TLCD"/>
</dbReference>
<dbReference type="PANTHER" id="PTHR13439">
    <property type="entry name" value="CT120 PROTEIN"/>
    <property type="match status" value="1"/>
</dbReference>
<dbReference type="PANTHER" id="PTHR13439:SF2">
    <property type="entry name" value="TLC DOMAIN-CONTAINING PROTEIN 2"/>
    <property type="match status" value="1"/>
</dbReference>
<dbReference type="Pfam" id="PF03798">
    <property type="entry name" value="TRAM_LAG1_CLN8"/>
    <property type="match status" value="1"/>
</dbReference>
<dbReference type="SMART" id="SM00724">
    <property type="entry name" value="TLC"/>
    <property type="match status" value="1"/>
</dbReference>
<dbReference type="PROSITE" id="PS50922">
    <property type="entry name" value="TLC"/>
    <property type="match status" value="1"/>
</dbReference>
<evidence type="ECO:0000255" key="1"/>
<evidence type="ECO:0000255" key="2">
    <source>
        <dbReference type="PROSITE-ProRule" id="PRU00205"/>
    </source>
</evidence>
<evidence type="ECO:0000256" key="3">
    <source>
        <dbReference type="SAM" id="MobiDB-lite"/>
    </source>
</evidence>
<evidence type="ECO:0000269" key="4">
    <source>
    </source>
</evidence>
<evidence type="ECO:0000305" key="5"/>
<evidence type="ECO:0000305" key="6">
    <source>
    </source>
</evidence>
<comment type="function">
    <text evidence="4">Regulates the composition and fluidity of the plasma membrane (PubMed:30509349). Inhibits the incorporation of membrane-fluidizing phospholipids containing omega-3 long-chain polyunsaturated fatty acids (LCPUFA) and thereby promotes membrane rigidity (PubMed:30509349). Does not appear to have any effect on LCPUFA synthesis (PubMed:30509349).</text>
</comment>
<comment type="subcellular location">
    <subcellularLocation>
        <location evidence="6">Cell membrane</location>
        <topology evidence="5">Multi-pass membrane protein</topology>
    </subcellularLocation>
</comment>
<comment type="similarity">
    <text evidence="5">Belongs to the TLCD family.</text>
</comment>
<protein>
    <recommendedName>
        <fullName>TLC domain-containing protein 2</fullName>
    </recommendedName>
</protein>
<sequence>MAPTGLLVAGASFLAFRGLHWGLRRLPTPESAARDRWQWWNLCVSLAHSLLSGTGALLGLSLYPQMAADPIHGHPRWALVLVAVSVGYFLADGADLLWNQTLGKTWDLLCHHLVVVSCLSTAVLSGHYVGFSMVSLLLELNSACLHLRKLLLLSRQAPSLAFSVTSWASLATLALFRLVPLGWMSLWLFRQHHQVPLALVTLGGIGLVTVGIMSIILGIRILVNDVLQSRPHPPSPGHEKTRGTRTRRDNGPVTSNSSTLSLKD</sequence>
<reference key="1">
    <citation type="journal article" date="2006" name="Nature">
        <title>DNA sequence of human chromosome 17 and analysis of rearrangement in the human lineage.</title>
        <authorList>
            <person name="Zody M.C."/>
            <person name="Garber M."/>
            <person name="Adams D.J."/>
            <person name="Sharpe T."/>
            <person name="Harrow J."/>
            <person name="Lupski J.R."/>
            <person name="Nicholson C."/>
            <person name="Searle S.M."/>
            <person name="Wilming L."/>
            <person name="Young S.K."/>
            <person name="Abouelleil A."/>
            <person name="Allen N.R."/>
            <person name="Bi W."/>
            <person name="Bloom T."/>
            <person name="Borowsky M.L."/>
            <person name="Bugalter B.E."/>
            <person name="Butler J."/>
            <person name="Chang J.L."/>
            <person name="Chen C.-K."/>
            <person name="Cook A."/>
            <person name="Corum B."/>
            <person name="Cuomo C.A."/>
            <person name="de Jong P.J."/>
            <person name="DeCaprio D."/>
            <person name="Dewar K."/>
            <person name="FitzGerald M."/>
            <person name="Gilbert J."/>
            <person name="Gibson R."/>
            <person name="Gnerre S."/>
            <person name="Goldstein S."/>
            <person name="Grafham D.V."/>
            <person name="Grocock R."/>
            <person name="Hafez N."/>
            <person name="Hagopian D.S."/>
            <person name="Hart E."/>
            <person name="Norman C.H."/>
            <person name="Humphray S."/>
            <person name="Jaffe D.B."/>
            <person name="Jones M."/>
            <person name="Kamal M."/>
            <person name="Khodiyar V.K."/>
            <person name="LaButti K."/>
            <person name="Laird G."/>
            <person name="Lehoczky J."/>
            <person name="Liu X."/>
            <person name="Lokyitsang T."/>
            <person name="Loveland J."/>
            <person name="Lui A."/>
            <person name="Macdonald P."/>
            <person name="Major J.E."/>
            <person name="Matthews L."/>
            <person name="Mauceli E."/>
            <person name="McCarroll S.A."/>
            <person name="Mihalev A.H."/>
            <person name="Mudge J."/>
            <person name="Nguyen C."/>
            <person name="Nicol R."/>
            <person name="O'Leary S.B."/>
            <person name="Osoegawa K."/>
            <person name="Schwartz D.C."/>
            <person name="Shaw-Smith C."/>
            <person name="Stankiewicz P."/>
            <person name="Steward C."/>
            <person name="Swarbreck D."/>
            <person name="Venkataraman V."/>
            <person name="Whittaker C.A."/>
            <person name="Yang X."/>
            <person name="Zimmer A.R."/>
            <person name="Bradley A."/>
            <person name="Hubbard T."/>
            <person name="Birren B.W."/>
            <person name="Rogers J."/>
            <person name="Lander E.S."/>
            <person name="Nusbaum C."/>
        </authorList>
    </citation>
    <scope>NUCLEOTIDE SEQUENCE [LARGE SCALE GENOMIC DNA]</scope>
</reference>
<reference key="2">
    <citation type="journal article" date="2018" name="Elife">
        <title>Membrane fluidity is regulated by the C. elegans transmembrane protein FLD-1 and its human homologs TLCD1/2.</title>
        <authorList>
            <person name="Ruiz M."/>
            <person name="Bodhicharla R."/>
            <person name="Svensk E."/>
            <person name="Devkota R."/>
            <person name="Busayavalasa K."/>
            <person name="Palmgren H."/>
            <person name="Staahlman M."/>
            <person name="Boren J."/>
            <person name="Pilon M."/>
        </authorList>
    </citation>
    <scope>FUNCTION</scope>
    <scope>SUBCELLULAR LOCATION</scope>
</reference>
<accession>A6NGC4</accession>
<gene>
    <name type="primary">TLCD2</name>
</gene>
<proteinExistence type="evidence at protein level"/>
<name>TLCD2_HUMAN</name>
<organism>
    <name type="scientific">Homo sapiens</name>
    <name type="common">Human</name>
    <dbReference type="NCBI Taxonomy" id="9606"/>
    <lineage>
        <taxon>Eukaryota</taxon>
        <taxon>Metazoa</taxon>
        <taxon>Chordata</taxon>
        <taxon>Craniata</taxon>
        <taxon>Vertebrata</taxon>
        <taxon>Euteleostomi</taxon>
        <taxon>Mammalia</taxon>
        <taxon>Eutheria</taxon>
        <taxon>Euarchontoglires</taxon>
        <taxon>Primates</taxon>
        <taxon>Haplorrhini</taxon>
        <taxon>Catarrhini</taxon>
        <taxon>Hominidae</taxon>
        <taxon>Homo</taxon>
    </lineage>
</organism>